<sequence length="248" mass="27150">MTEGARSTIDQGEVNRFSAMAAEWWSPTGKFKPLHKFNPVRLGYIRDKACENFGRDPKSARPLEGLRVLDIGCGGGLLSEPVARMGASVVGADPSEKNIGIASTHAKASGVSVDYRAVTAEELAEAGETFDIVLNMEVVEHVADVELFMTTCAKMVRPGGLIFVATINRTMKAAALAIFAAENILRWLPRGTHQYEKLVRPEELEKPLAASGLEITDRTGVFFNPLSNQWKLSRDMDVNYMLLAKRPA</sequence>
<feature type="chain" id="PRO_0000241725" description="Ubiquinone biosynthesis O-methyltransferase">
    <location>
        <begin position="1"/>
        <end position="248"/>
    </location>
</feature>
<feature type="binding site" evidence="1">
    <location>
        <position position="41"/>
    </location>
    <ligand>
        <name>S-adenosyl-L-methionine</name>
        <dbReference type="ChEBI" id="CHEBI:59789"/>
    </ligand>
</feature>
<feature type="binding site" evidence="1">
    <location>
        <position position="72"/>
    </location>
    <ligand>
        <name>S-adenosyl-L-methionine</name>
        <dbReference type="ChEBI" id="CHEBI:59789"/>
    </ligand>
</feature>
<feature type="binding site" evidence="1">
    <location>
        <position position="93"/>
    </location>
    <ligand>
        <name>S-adenosyl-L-methionine</name>
        <dbReference type="ChEBI" id="CHEBI:59789"/>
    </ligand>
</feature>
<feature type="binding site" evidence="1">
    <location>
        <position position="136"/>
    </location>
    <ligand>
        <name>S-adenosyl-L-methionine</name>
        <dbReference type="ChEBI" id="CHEBI:59789"/>
    </ligand>
</feature>
<protein>
    <recommendedName>
        <fullName evidence="1">Ubiquinone biosynthesis O-methyltransferase</fullName>
    </recommendedName>
    <alternativeName>
        <fullName evidence="1">2-polyprenyl-6-hydroxyphenol methylase</fullName>
        <ecNumber evidence="1">2.1.1.222</ecNumber>
    </alternativeName>
    <alternativeName>
        <fullName evidence="1">3-demethylubiquinone 3-O-methyltransferase</fullName>
        <ecNumber evidence="1">2.1.1.64</ecNumber>
    </alternativeName>
</protein>
<evidence type="ECO:0000255" key="1">
    <source>
        <dbReference type="HAMAP-Rule" id="MF_00472"/>
    </source>
</evidence>
<proteinExistence type="inferred from homology"/>
<organism>
    <name type="scientific">Rhizobium etli (strain ATCC 51251 / DSM 11541 / JCM 21823 / NBRC 15573 / CFN 42)</name>
    <dbReference type="NCBI Taxonomy" id="347834"/>
    <lineage>
        <taxon>Bacteria</taxon>
        <taxon>Pseudomonadati</taxon>
        <taxon>Pseudomonadota</taxon>
        <taxon>Alphaproteobacteria</taxon>
        <taxon>Hyphomicrobiales</taxon>
        <taxon>Rhizobiaceae</taxon>
        <taxon>Rhizobium/Agrobacterium group</taxon>
        <taxon>Rhizobium</taxon>
    </lineage>
</organism>
<accession>Q2K3S8</accession>
<gene>
    <name evidence="1" type="primary">ubiG</name>
    <name type="ordered locus">RHE_CH03759</name>
</gene>
<comment type="function">
    <text evidence="1">O-methyltransferase that catalyzes the 2 O-methylation steps in the ubiquinone biosynthetic pathway.</text>
</comment>
<comment type="catalytic activity">
    <reaction evidence="1">
        <text>a 3-demethylubiquinol + S-adenosyl-L-methionine = a ubiquinol + S-adenosyl-L-homocysteine + H(+)</text>
        <dbReference type="Rhea" id="RHEA:44380"/>
        <dbReference type="Rhea" id="RHEA-COMP:9566"/>
        <dbReference type="Rhea" id="RHEA-COMP:10914"/>
        <dbReference type="ChEBI" id="CHEBI:15378"/>
        <dbReference type="ChEBI" id="CHEBI:17976"/>
        <dbReference type="ChEBI" id="CHEBI:57856"/>
        <dbReference type="ChEBI" id="CHEBI:59789"/>
        <dbReference type="ChEBI" id="CHEBI:84422"/>
        <dbReference type="EC" id="2.1.1.64"/>
    </reaction>
</comment>
<comment type="catalytic activity">
    <reaction evidence="1">
        <text>a 3-(all-trans-polyprenyl)benzene-1,2-diol + S-adenosyl-L-methionine = a 2-methoxy-6-(all-trans-polyprenyl)phenol + S-adenosyl-L-homocysteine + H(+)</text>
        <dbReference type="Rhea" id="RHEA:31411"/>
        <dbReference type="Rhea" id="RHEA-COMP:9550"/>
        <dbReference type="Rhea" id="RHEA-COMP:9551"/>
        <dbReference type="ChEBI" id="CHEBI:15378"/>
        <dbReference type="ChEBI" id="CHEBI:57856"/>
        <dbReference type="ChEBI" id="CHEBI:59789"/>
        <dbReference type="ChEBI" id="CHEBI:62729"/>
        <dbReference type="ChEBI" id="CHEBI:62731"/>
        <dbReference type="EC" id="2.1.1.222"/>
    </reaction>
</comment>
<comment type="pathway">
    <text evidence="1">Cofactor biosynthesis; ubiquinone biosynthesis.</text>
</comment>
<comment type="similarity">
    <text evidence="1">Belongs to the methyltransferase superfamily. UbiG/COQ3 family.</text>
</comment>
<name>UBIG_RHIEC</name>
<reference key="1">
    <citation type="journal article" date="2006" name="Proc. Natl. Acad. Sci. U.S.A.">
        <title>The partitioned Rhizobium etli genome: genetic and metabolic redundancy in seven interacting replicons.</title>
        <authorList>
            <person name="Gonzalez V."/>
            <person name="Santamaria R.I."/>
            <person name="Bustos P."/>
            <person name="Hernandez-Gonzalez I."/>
            <person name="Medrano-Soto A."/>
            <person name="Moreno-Hagelsieb G."/>
            <person name="Janga S.C."/>
            <person name="Ramirez M.A."/>
            <person name="Jimenez-Jacinto V."/>
            <person name="Collado-Vides J."/>
            <person name="Davila G."/>
        </authorList>
    </citation>
    <scope>NUCLEOTIDE SEQUENCE [LARGE SCALE GENOMIC DNA]</scope>
    <source>
        <strain>ATCC 51251 / DSM 11541 / JCM 21823 / NBRC 15573 / CFN 42</strain>
    </source>
</reference>
<dbReference type="EC" id="2.1.1.222" evidence="1"/>
<dbReference type="EC" id="2.1.1.64" evidence="1"/>
<dbReference type="EMBL" id="CP000133">
    <property type="protein sequence ID" value="ABC92508.1"/>
    <property type="molecule type" value="Genomic_DNA"/>
</dbReference>
<dbReference type="RefSeq" id="WP_011426960.1">
    <property type="nucleotide sequence ID" value="NC_007761.1"/>
</dbReference>
<dbReference type="SMR" id="Q2K3S8"/>
<dbReference type="KEGG" id="ret:RHE_CH03759"/>
<dbReference type="eggNOG" id="COG2227">
    <property type="taxonomic scope" value="Bacteria"/>
</dbReference>
<dbReference type="HOGENOM" id="CLU_042432_0_0_5"/>
<dbReference type="OrthoDB" id="9801538at2"/>
<dbReference type="UniPathway" id="UPA00232"/>
<dbReference type="Proteomes" id="UP000001936">
    <property type="component" value="Chromosome"/>
</dbReference>
<dbReference type="GO" id="GO:0102208">
    <property type="term" value="F:2-polyprenyl-6-hydroxyphenol methylase activity"/>
    <property type="evidence" value="ECO:0007669"/>
    <property type="project" value="UniProtKB-EC"/>
</dbReference>
<dbReference type="GO" id="GO:0061542">
    <property type="term" value="F:3-demethylubiquinol 3-O-methyltransferase activity"/>
    <property type="evidence" value="ECO:0007669"/>
    <property type="project" value="UniProtKB-UniRule"/>
</dbReference>
<dbReference type="GO" id="GO:0010420">
    <property type="term" value="F:polyprenyldihydroxybenzoate methyltransferase activity"/>
    <property type="evidence" value="ECO:0007669"/>
    <property type="project" value="InterPro"/>
</dbReference>
<dbReference type="GO" id="GO:0032259">
    <property type="term" value="P:methylation"/>
    <property type="evidence" value="ECO:0007669"/>
    <property type="project" value="UniProtKB-KW"/>
</dbReference>
<dbReference type="CDD" id="cd02440">
    <property type="entry name" value="AdoMet_MTases"/>
    <property type="match status" value="1"/>
</dbReference>
<dbReference type="Gene3D" id="3.40.50.150">
    <property type="entry name" value="Vaccinia Virus protein VP39"/>
    <property type="match status" value="1"/>
</dbReference>
<dbReference type="HAMAP" id="MF_00472">
    <property type="entry name" value="UbiG"/>
    <property type="match status" value="1"/>
</dbReference>
<dbReference type="InterPro" id="IPR029063">
    <property type="entry name" value="SAM-dependent_MTases_sf"/>
</dbReference>
<dbReference type="InterPro" id="IPR010233">
    <property type="entry name" value="UbiG_MeTrfase"/>
</dbReference>
<dbReference type="NCBIfam" id="TIGR01983">
    <property type="entry name" value="UbiG"/>
    <property type="match status" value="1"/>
</dbReference>
<dbReference type="PANTHER" id="PTHR43464">
    <property type="entry name" value="METHYLTRANSFERASE"/>
    <property type="match status" value="1"/>
</dbReference>
<dbReference type="PANTHER" id="PTHR43464:SF19">
    <property type="entry name" value="UBIQUINONE BIOSYNTHESIS O-METHYLTRANSFERASE, MITOCHONDRIAL"/>
    <property type="match status" value="1"/>
</dbReference>
<dbReference type="Pfam" id="PF13489">
    <property type="entry name" value="Methyltransf_23"/>
    <property type="match status" value="1"/>
</dbReference>
<dbReference type="SUPFAM" id="SSF53335">
    <property type="entry name" value="S-adenosyl-L-methionine-dependent methyltransferases"/>
    <property type="match status" value="1"/>
</dbReference>
<keyword id="KW-0489">Methyltransferase</keyword>
<keyword id="KW-1185">Reference proteome</keyword>
<keyword id="KW-0949">S-adenosyl-L-methionine</keyword>
<keyword id="KW-0808">Transferase</keyword>
<keyword id="KW-0831">Ubiquinone biosynthesis</keyword>